<keyword id="KW-0009">Actin-binding</keyword>
<name>ADF1_PETHY</name>
<proteinExistence type="evidence at transcript level"/>
<protein>
    <recommendedName>
        <fullName>Actin-depolymerizing factor 1</fullName>
        <shortName>ADF-1</shortName>
    </recommendedName>
</protein>
<reference key="1">
    <citation type="journal article" date="2000" name="Gene">
        <title>Two closely related cDNAs encoding actin-depolymerizing factors of petunia are mainly expressed in vegetative tissues.</title>
        <authorList>
            <person name="Mun J.-H."/>
            <person name="Yu H.-J."/>
            <person name="Lee H.S."/>
            <person name="Kwon Y.M."/>
            <person name="Lee J.S."/>
            <person name="Lee I."/>
            <person name="Kim S.-G."/>
        </authorList>
    </citation>
    <scope>NUCLEOTIDE SEQUENCE [MRNA]</scope>
</reference>
<evidence type="ECO:0000250" key="1"/>
<evidence type="ECO:0000255" key="2">
    <source>
        <dbReference type="PROSITE-ProRule" id="PRU00599"/>
    </source>
</evidence>
<evidence type="ECO:0000305" key="3"/>
<sequence length="139" mass="16041">MANAASGMAVHDDCKLRFLELKAKRTHRFIVYKIEEKQKQVVVEKIGEPTESYEDFAASLPENECRYAVYDFDFVTAENCQKSRIFFIAWCPDTARVRSKMIYASSKDRFKRELDGIQVELQACDPTEMGLDVIQSRAN</sequence>
<gene>
    <name type="primary">ADF1</name>
</gene>
<comment type="function">
    <text evidence="1">Actin-depolymerizing protein. Severs actin filaments (F-actin) and binds to actin monomers (By similarity).</text>
</comment>
<comment type="similarity">
    <text evidence="3">Belongs to the actin-binding proteins ADF family.</text>
</comment>
<dbReference type="EMBL" id="AF183903">
    <property type="protein sequence ID" value="AAG16973.1"/>
    <property type="molecule type" value="mRNA"/>
</dbReference>
<dbReference type="SMR" id="Q9FVI2"/>
<dbReference type="GO" id="GO:0015629">
    <property type="term" value="C:actin cytoskeleton"/>
    <property type="evidence" value="ECO:0007669"/>
    <property type="project" value="InterPro"/>
</dbReference>
<dbReference type="GO" id="GO:0003779">
    <property type="term" value="F:actin binding"/>
    <property type="evidence" value="ECO:0007669"/>
    <property type="project" value="UniProtKB-KW"/>
</dbReference>
<dbReference type="GO" id="GO:0030042">
    <property type="term" value="P:actin filament depolymerization"/>
    <property type="evidence" value="ECO:0007669"/>
    <property type="project" value="InterPro"/>
</dbReference>
<dbReference type="CDD" id="cd11286">
    <property type="entry name" value="ADF_cofilin_like"/>
    <property type="match status" value="1"/>
</dbReference>
<dbReference type="FunFam" id="3.40.20.10:FF:000025">
    <property type="entry name" value="Actin-depolymerizing factor 2"/>
    <property type="match status" value="1"/>
</dbReference>
<dbReference type="Gene3D" id="3.40.20.10">
    <property type="entry name" value="Severin"/>
    <property type="match status" value="1"/>
</dbReference>
<dbReference type="InterPro" id="IPR002108">
    <property type="entry name" value="ADF-H"/>
</dbReference>
<dbReference type="InterPro" id="IPR029006">
    <property type="entry name" value="ADF-H/Gelsolin-like_dom_sf"/>
</dbReference>
<dbReference type="InterPro" id="IPR017904">
    <property type="entry name" value="ADF/Cofilin"/>
</dbReference>
<dbReference type="PANTHER" id="PTHR11913">
    <property type="entry name" value="COFILIN-RELATED"/>
    <property type="match status" value="1"/>
</dbReference>
<dbReference type="Pfam" id="PF00241">
    <property type="entry name" value="Cofilin_ADF"/>
    <property type="match status" value="1"/>
</dbReference>
<dbReference type="SMART" id="SM00102">
    <property type="entry name" value="ADF"/>
    <property type="match status" value="1"/>
</dbReference>
<dbReference type="SUPFAM" id="SSF55753">
    <property type="entry name" value="Actin depolymerizing proteins"/>
    <property type="match status" value="1"/>
</dbReference>
<dbReference type="PROSITE" id="PS51263">
    <property type="entry name" value="ADF_H"/>
    <property type="match status" value="1"/>
</dbReference>
<accession>Q9FVI2</accession>
<organism>
    <name type="scientific">Petunia hybrida</name>
    <name type="common">Petunia</name>
    <dbReference type="NCBI Taxonomy" id="4102"/>
    <lineage>
        <taxon>Eukaryota</taxon>
        <taxon>Viridiplantae</taxon>
        <taxon>Streptophyta</taxon>
        <taxon>Embryophyta</taxon>
        <taxon>Tracheophyta</taxon>
        <taxon>Spermatophyta</taxon>
        <taxon>Magnoliopsida</taxon>
        <taxon>eudicotyledons</taxon>
        <taxon>Gunneridae</taxon>
        <taxon>Pentapetalae</taxon>
        <taxon>asterids</taxon>
        <taxon>lamiids</taxon>
        <taxon>Solanales</taxon>
        <taxon>Solanaceae</taxon>
        <taxon>Petunioideae</taxon>
        <taxon>Petunia</taxon>
    </lineage>
</organism>
<feature type="chain" id="PRO_0000214935" description="Actin-depolymerizing factor 1">
    <location>
        <begin position="1"/>
        <end position="139"/>
    </location>
</feature>
<feature type="domain" description="ADF-H" evidence="2">
    <location>
        <begin position="5"/>
        <end position="139"/>
    </location>
</feature>